<organism>
    <name type="scientific">Streptococcus pyogenes serotype M1</name>
    <dbReference type="NCBI Taxonomy" id="301447"/>
    <lineage>
        <taxon>Bacteria</taxon>
        <taxon>Bacillati</taxon>
        <taxon>Bacillota</taxon>
        <taxon>Bacilli</taxon>
        <taxon>Lactobacillales</taxon>
        <taxon>Streptococcaceae</taxon>
        <taxon>Streptococcus</taxon>
    </lineage>
</organism>
<reference key="1">
    <citation type="journal article" date="2001" name="Proc. Natl. Acad. Sci. U.S.A.">
        <title>Complete genome sequence of an M1 strain of Streptococcus pyogenes.</title>
        <authorList>
            <person name="Ferretti J.J."/>
            <person name="McShan W.M."/>
            <person name="Ajdic D.J."/>
            <person name="Savic D.J."/>
            <person name="Savic G."/>
            <person name="Lyon K."/>
            <person name="Primeaux C."/>
            <person name="Sezate S."/>
            <person name="Suvorov A.N."/>
            <person name="Kenton S."/>
            <person name="Lai H.S."/>
            <person name="Lin S.P."/>
            <person name="Qian Y."/>
            <person name="Jia H.G."/>
            <person name="Najar F.Z."/>
            <person name="Ren Q."/>
            <person name="Zhu H."/>
            <person name="Song L."/>
            <person name="White J."/>
            <person name="Yuan X."/>
            <person name="Clifton S.W."/>
            <person name="Roe B.A."/>
            <person name="McLaughlin R.E."/>
        </authorList>
    </citation>
    <scope>NUCLEOTIDE SEQUENCE [LARGE SCALE GENOMIC DNA]</scope>
    <source>
        <strain>ATCC 700294 / SF370 / Serotype M1</strain>
    </source>
</reference>
<reference key="2">
    <citation type="journal article" date="2005" name="J. Infect. Dis.">
        <title>Evolutionary origin and emergence of a highly successful clone of serotype M1 group A Streptococcus involved multiple horizontal gene transfer events.</title>
        <authorList>
            <person name="Sumby P."/>
            <person name="Porcella S.F."/>
            <person name="Madrigal A.G."/>
            <person name="Barbian K.D."/>
            <person name="Virtaneva K."/>
            <person name="Ricklefs S.M."/>
            <person name="Sturdevant D.E."/>
            <person name="Graham M.R."/>
            <person name="Vuopio-Varkila J."/>
            <person name="Hoe N.P."/>
            <person name="Musser J.M."/>
        </authorList>
    </citation>
    <scope>NUCLEOTIDE SEQUENCE [LARGE SCALE GENOMIC DNA]</scope>
    <source>
        <strain>ATCC BAA-947 / MGAS5005 / Serotype M1</strain>
    </source>
</reference>
<proteinExistence type="inferred from homology"/>
<keyword id="KW-1185">Reference proteome</keyword>
<keyword id="KW-0687">Ribonucleoprotein</keyword>
<keyword id="KW-0689">Ribosomal protein</keyword>
<gene>
    <name evidence="1" type="primary">rpsI</name>
    <name evidence="1" type="synonym">rps9</name>
    <name type="ordered locus">SPy_1931</name>
    <name type="ordered locus">M5005_Spy1646</name>
</gene>
<feature type="chain" id="PRO_0000111422" description="Small ribosomal subunit protein uS9">
    <location>
        <begin position="1"/>
        <end position="130"/>
    </location>
</feature>
<name>RS9_STRP1</name>
<dbReference type="EMBL" id="AE004092">
    <property type="protein sequence ID" value="AAK34630.1"/>
    <property type="molecule type" value="Genomic_DNA"/>
</dbReference>
<dbReference type="EMBL" id="CP000017">
    <property type="protein sequence ID" value="AAZ52264.1"/>
    <property type="molecule type" value="Genomic_DNA"/>
</dbReference>
<dbReference type="RefSeq" id="NP_269909.1">
    <property type="nucleotide sequence ID" value="NC_002737.2"/>
</dbReference>
<dbReference type="SMR" id="P66648"/>
<dbReference type="PaxDb" id="1314-HKU360_01765"/>
<dbReference type="KEGG" id="spy:SPy_1931"/>
<dbReference type="KEGG" id="spz:M5005_Spy1646"/>
<dbReference type="PATRIC" id="fig|160490.10.peg.1679"/>
<dbReference type="HOGENOM" id="CLU_046483_2_1_9"/>
<dbReference type="OMA" id="KFQFSKR"/>
<dbReference type="PRO" id="PR:P66648"/>
<dbReference type="Proteomes" id="UP000000750">
    <property type="component" value="Chromosome"/>
</dbReference>
<dbReference type="GO" id="GO:0022627">
    <property type="term" value="C:cytosolic small ribosomal subunit"/>
    <property type="evidence" value="ECO:0007669"/>
    <property type="project" value="TreeGrafter"/>
</dbReference>
<dbReference type="GO" id="GO:0003723">
    <property type="term" value="F:RNA binding"/>
    <property type="evidence" value="ECO:0007669"/>
    <property type="project" value="TreeGrafter"/>
</dbReference>
<dbReference type="GO" id="GO:0003735">
    <property type="term" value="F:structural constituent of ribosome"/>
    <property type="evidence" value="ECO:0007669"/>
    <property type="project" value="InterPro"/>
</dbReference>
<dbReference type="GO" id="GO:0006412">
    <property type="term" value="P:translation"/>
    <property type="evidence" value="ECO:0007669"/>
    <property type="project" value="UniProtKB-UniRule"/>
</dbReference>
<dbReference type="FunFam" id="3.30.230.10:FF:000001">
    <property type="entry name" value="30S ribosomal protein S9"/>
    <property type="match status" value="1"/>
</dbReference>
<dbReference type="Gene3D" id="3.30.230.10">
    <property type="match status" value="1"/>
</dbReference>
<dbReference type="HAMAP" id="MF_00532_B">
    <property type="entry name" value="Ribosomal_uS9_B"/>
    <property type="match status" value="1"/>
</dbReference>
<dbReference type="InterPro" id="IPR020568">
    <property type="entry name" value="Ribosomal_Su5_D2-typ_SF"/>
</dbReference>
<dbReference type="InterPro" id="IPR000754">
    <property type="entry name" value="Ribosomal_uS9"/>
</dbReference>
<dbReference type="InterPro" id="IPR023035">
    <property type="entry name" value="Ribosomal_uS9_bac/plastid"/>
</dbReference>
<dbReference type="InterPro" id="IPR020574">
    <property type="entry name" value="Ribosomal_uS9_CS"/>
</dbReference>
<dbReference type="InterPro" id="IPR014721">
    <property type="entry name" value="Ribsml_uS5_D2-typ_fold_subgr"/>
</dbReference>
<dbReference type="NCBIfam" id="NF001099">
    <property type="entry name" value="PRK00132.1"/>
    <property type="match status" value="1"/>
</dbReference>
<dbReference type="PANTHER" id="PTHR21569">
    <property type="entry name" value="RIBOSOMAL PROTEIN S9"/>
    <property type="match status" value="1"/>
</dbReference>
<dbReference type="PANTHER" id="PTHR21569:SF1">
    <property type="entry name" value="SMALL RIBOSOMAL SUBUNIT PROTEIN US9M"/>
    <property type="match status" value="1"/>
</dbReference>
<dbReference type="Pfam" id="PF00380">
    <property type="entry name" value="Ribosomal_S9"/>
    <property type="match status" value="1"/>
</dbReference>
<dbReference type="SUPFAM" id="SSF54211">
    <property type="entry name" value="Ribosomal protein S5 domain 2-like"/>
    <property type="match status" value="1"/>
</dbReference>
<dbReference type="PROSITE" id="PS00360">
    <property type="entry name" value="RIBOSOMAL_S9"/>
    <property type="match status" value="1"/>
</dbReference>
<sequence>MAQAQYAGTGRRKNAVARVRLVPGTGKITVNKKDVEEYIPHADLRLIINQPFAVTSTEGSYDVFVNVVGGGYGGQSGAIRHGIARALLQVDPDFRDSLKRAGLLTRDARMVERKKPGLKKARKASQFSKR</sequence>
<comment type="similarity">
    <text evidence="1">Belongs to the universal ribosomal protein uS9 family.</text>
</comment>
<protein>
    <recommendedName>
        <fullName evidence="1">Small ribosomal subunit protein uS9</fullName>
    </recommendedName>
    <alternativeName>
        <fullName evidence="2">30S ribosomal protein S9</fullName>
    </alternativeName>
</protein>
<accession>P66648</accession>
<accession>Q48WL1</accession>
<accession>Q99Y08</accession>
<evidence type="ECO:0000255" key="1">
    <source>
        <dbReference type="HAMAP-Rule" id="MF_00532"/>
    </source>
</evidence>
<evidence type="ECO:0000305" key="2"/>